<feature type="chain" id="PRO_0000234235" description="Urease subunit beta 2">
    <location>
        <begin position="1"/>
        <end position="159"/>
    </location>
</feature>
<feature type="region of interest" description="Disordered" evidence="2">
    <location>
        <begin position="1"/>
        <end position="23"/>
    </location>
</feature>
<organism>
    <name type="scientific">Brucella abortus (strain 2308)</name>
    <dbReference type="NCBI Taxonomy" id="359391"/>
    <lineage>
        <taxon>Bacteria</taxon>
        <taxon>Pseudomonadati</taxon>
        <taxon>Pseudomonadota</taxon>
        <taxon>Alphaproteobacteria</taxon>
        <taxon>Hyphomicrobiales</taxon>
        <taxon>Brucellaceae</taxon>
        <taxon>Brucella/Ochrobactrum group</taxon>
        <taxon>Brucella</taxon>
    </lineage>
</organism>
<keyword id="KW-0963">Cytoplasm</keyword>
<keyword id="KW-0378">Hydrolase</keyword>
<keyword id="KW-1185">Reference proteome</keyword>
<evidence type="ECO:0000255" key="1">
    <source>
        <dbReference type="HAMAP-Rule" id="MF_01954"/>
    </source>
</evidence>
<evidence type="ECO:0000256" key="2">
    <source>
        <dbReference type="SAM" id="MobiDB-lite"/>
    </source>
</evidence>
<name>URE22_BRUA2</name>
<reference key="1">
    <citation type="journal article" date="2005" name="Infect. Immun.">
        <title>Whole-genome analyses of speciation events in pathogenic Brucellae.</title>
        <authorList>
            <person name="Chain P.S."/>
            <person name="Comerci D.J."/>
            <person name="Tolmasky M.E."/>
            <person name="Larimer F.W."/>
            <person name="Malfatti S.A."/>
            <person name="Vergez L.M."/>
            <person name="Aguero F."/>
            <person name="Land M.L."/>
            <person name="Ugalde R.A."/>
            <person name="Garcia E."/>
        </authorList>
    </citation>
    <scope>NUCLEOTIDE SEQUENCE [LARGE SCALE GENOMIC DNA]</scope>
    <source>
        <strain>2308</strain>
    </source>
</reference>
<reference key="2">
    <citation type="journal article" date="2007" name="Infect. Immun.">
        <title>Characterization of the urease operon of Brucella abortus and assessment of its role in virulence of the bacterium.</title>
        <authorList>
            <person name="Sangari F.J."/>
            <person name="Seoane A."/>
            <person name="Rodriguez M.C."/>
            <person name="Aguero J."/>
            <person name="Garcia Lobo J.M."/>
        </authorList>
    </citation>
    <scope>LACK OF ROLE IN VIRULENCE</scope>
</reference>
<comment type="function">
    <text>Disrupting the ure2 operon has no effect on urease activity or pathogen survival in BALB/c mice when administered orally.</text>
</comment>
<comment type="catalytic activity">
    <reaction evidence="1">
        <text>urea + 2 H2O + H(+) = hydrogencarbonate + 2 NH4(+)</text>
        <dbReference type="Rhea" id="RHEA:20557"/>
        <dbReference type="ChEBI" id="CHEBI:15377"/>
        <dbReference type="ChEBI" id="CHEBI:15378"/>
        <dbReference type="ChEBI" id="CHEBI:16199"/>
        <dbReference type="ChEBI" id="CHEBI:17544"/>
        <dbReference type="ChEBI" id="CHEBI:28938"/>
        <dbReference type="EC" id="3.5.1.5"/>
    </reaction>
</comment>
<comment type="pathway">
    <text evidence="1">Nitrogen metabolism; urea degradation; CO(2) and NH(3) from urea (urease route): step 1/1.</text>
</comment>
<comment type="subunit">
    <text evidence="1">Heterotrimer of UreA (gamma), UreB (beta) and UreC (alpha) subunits. Three heterotrimers associate to form the active enzyme.</text>
</comment>
<comment type="subcellular location">
    <subcellularLocation>
        <location evidence="1">Cytoplasm</location>
    </subcellularLocation>
</comment>
<comment type="similarity">
    <text evidence="1">Belongs to the urease beta subunit family.</text>
</comment>
<proteinExistence type="inferred from homology"/>
<dbReference type="EC" id="3.5.1.5" evidence="1"/>
<dbReference type="EMBL" id="AM040264">
    <property type="protein sequence ID" value="CAJ11333.1"/>
    <property type="molecule type" value="Genomic_DNA"/>
</dbReference>
<dbReference type="RefSeq" id="WP_002964470.1">
    <property type="nucleotide sequence ID" value="NZ_KN046823.1"/>
</dbReference>
<dbReference type="SMR" id="Q2YQD9"/>
<dbReference type="STRING" id="359391.BAB1_1377"/>
<dbReference type="KEGG" id="bmf:BAB1_1377"/>
<dbReference type="PATRIC" id="fig|359391.11.peg.827"/>
<dbReference type="HOGENOM" id="CLU_129707_2_0_5"/>
<dbReference type="PhylomeDB" id="Q2YQD9"/>
<dbReference type="UniPathway" id="UPA00258">
    <property type="reaction ID" value="UER00370"/>
</dbReference>
<dbReference type="Proteomes" id="UP000002719">
    <property type="component" value="Chromosome I"/>
</dbReference>
<dbReference type="GO" id="GO:0035550">
    <property type="term" value="C:urease complex"/>
    <property type="evidence" value="ECO:0007669"/>
    <property type="project" value="InterPro"/>
</dbReference>
<dbReference type="GO" id="GO:0009039">
    <property type="term" value="F:urease activity"/>
    <property type="evidence" value="ECO:0007669"/>
    <property type="project" value="UniProtKB-UniRule"/>
</dbReference>
<dbReference type="GO" id="GO:0043419">
    <property type="term" value="P:urea catabolic process"/>
    <property type="evidence" value="ECO:0007669"/>
    <property type="project" value="UniProtKB-UniRule"/>
</dbReference>
<dbReference type="CDD" id="cd00407">
    <property type="entry name" value="Urease_beta"/>
    <property type="match status" value="1"/>
</dbReference>
<dbReference type="FunFam" id="2.10.150.10:FF:000001">
    <property type="entry name" value="Urease subunit beta"/>
    <property type="match status" value="1"/>
</dbReference>
<dbReference type="Gene3D" id="2.10.150.10">
    <property type="entry name" value="Urease, beta subunit"/>
    <property type="match status" value="1"/>
</dbReference>
<dbReference type="HAMAP" id="MF_01954">
    <property type="entry name" value="Urease_beta"/>
    <property type="match status" value="1"/>
</dbReference>
<dbReference type="InterPro" id="IPR002019">
    <property type="entry name" value="Urease_beta-like"/>
</dbReference>
<dbReference type="InterPro" id="IPR036461">
    <property type="entry name" value="Urease_betasu_sf"/>
</dbReference>
<dbReference type="InterPro" id="IPR050069">
    <property type="entry name" value="Urease_subunit"/>
</dbReference>
<dbReference type="NCBIfam" id="NF009682">
    <property type="entry name" value="PRK13203.1"/>
    <property type="match status" value="1"/>
</dbReference>
<dbReference type="NCBIfam" id="TIGR00192">
    <property type="entry name" value="urease_beta"/>
    <property type="match status" value="1"/>
</dbReference>
<dbReference type="PANTHER" id="PTHR33569">
    <property type="entry name" value="UREASE"/>
    <property type="match status" value="1"/>
</dbReference>
<dbReference type="PANTHER" id="PTHR33569:SF1">
    <property type="entry name" value="UREASE"/>
    <property type="match status" value="1"/>
</dbReference>
<dbReference type="Pfam" id="PF00699">
    <property type="entry name" value="Urease_beta"/>
    <property type="match status" value="1"/>
</dbReference>
<dbReference type="SUPFAM" id="SSF51278">
    <property type="entry name" value="Urease, beta-subunit"/>
    <property type="match status" value="1"/>
</dbReference>
<protein>
    <recommendedName>
        <fullName evidence="1">Urease subunit beta 2</fullName>
        <ecNumber evidence="1">3.5.1.5</ecNumber>
    </recommendedName>
    <alternativeName>
        <fullName evidence="1">Urea amidohydrolase subunit beta 2</fullName>
    </alternativeName>
</protein>
<accession>Q2YQD9</accession>
<sequence>MAKEPTEAAHPQPEQTKTNHKAHRPVGGYVLAKDPIEINQGRPRTTLTVRNTGDRPIQIGSHFHFFEVNRYLEFDRSKAFGLRLDIPANTAVRFEPGDEKEVTLVPFAGKRFIFGFNNLVDGWSGDGPTPDYQPNREIAAERAEKLGFKSCKSGGKDAK</sequence>
<gene>
    <name evidence="1" type="primary">ureB2</name>
    <name type="ordered locus">BAB1_1377</name>
</gene>